<gene>
    <name evidence="4" type="primary">asuE2</name>
</gene>
<sequence length="185" mass="19286">MSTHTARRAGATAGHDRDRGTEPGRTEFRRAMGLLPTGVAVVTVGSGEQTEAVTVGSVVSVSLDPALVLVSLGSTGRLVEAIDRAGGFAVNVLTTEQSDLSACFASHDRPHGRGAEERLGGVAGASGHVLLRDAVLSMECRTEHRYPGGDHVLFLGRVDELHTAEAAGSPLVHHRGAYTTLKDPC</sequence>
<accession>D7P5W0</accession>
<proteinExistence type="evidence at protein level"/>
<protein>
    <recommendedName>
        <fullName evidence="6">NADH-dependent FMN reductase AsuE2</fullName>
        <ecNumber evidence="3">1.5.1.42</ecNumber>
    </recommendedName>
    <alternativeName>
        <fullName evidence="5">Flavin reductase</fullName>
    </alternativeName>
</protein>
<keyword id="KW-0045">Antibiotic biosynthesis</keyword>
<keyword id="KW-0285">Flavoprotein</keyword>
<keyword id="KW-0288">FMN</keyword>
<keyword id="KW-0520">NAD</keyword>
<keyword id="KW-0560">Oxidoreductase</keyword>
<name>ASUE2_STRNS</name>
<reference key="1">
    <citation type="journal article" date="2010" name="J. Biol. Chem.">
        <title>Biochemical and genetic insights into asukamycin biosynthesis.</title>
        <authorList>
            <person name="Rui Z."/>
            <person name="Petrickova K."/>
            <person name="Skanta F."/>
            <person name="Pospisil S."/>
            <person name="Yang Y."/>
            <person name="Chen C.Y."/>
            <person name="Tsai S.F."/>
            <person name="Floss H.G."/>
            <person name="Petricek M."/>
            <person name="Yu T.W."/>
        </authorList>
    </citation>
    <scope>NUCLEOTIDE SEQUENCE [GENOMIC DNA]</scope>
    <scope>FUNCTION</scope>
    <scope>PATHWAY</scope>
    <scope>DISRUPTION PHENOTYPE</scope>
    <source>
        <strain>ATCC 29757 / FERM-P 3429 / AM-1042</strain>
    </source>
</reference>
<reference key="2">
    <citation type="journal article" date="2013" name="Chem. Biol.">
        <title>Tandem enzymatic oxygenations in biosynthesis of epoxyquinone pharmacophore of manumycin-type metabolites.</title>
        <authorList>
            <person name="Rui Z."/>
            <person name="Sandy M."/>
            <person name="Jung B."/>
            <person name="Zhang W."/>
        </authorList>
    </citation>
    <scope>FUNCTION</scope>
    <scope>CATALYTIC ACTIVITY</scope>
    <scope>BIOPHYSICOCHEMICAL PROPERTIES</scope>
    <scope>SUBUNIT</scope>
    <source>
        <strain>ATCC 29757 / FERM-P 3429 / AM-1042</strain>
    </source>
</reference>
<organism>
    <name type="scientific">Streptomyces nodosus subsp. asukaensis</name>
    <dbReference type="NCBI Taxonomy" id="222892"/>
    <lineage>
        <taxon>Bacteria</taxon>
        <taxon>Bacillati</taxon>
        <taxon>Actinomycetota</taxon>
        <taxon>Actinomycetes</taxon>
        <taxon>Kitasatosporales</taxon>
        <taxon>Streptomycetaceae</taxon>
        <taxon>Streptomyces</taxon>
    </lineage>
</organism>
<dbReference type="EC" id="1.5.1.42" evidence="3"/>
<dbReference type="EMBL" id="GQ926890">
    <property type="protein sequence ID" value="ADI58638.1"/>
    <property type="molecule type" value="Genomic_DNA"/>
</dbReference>
<dbReference type="SMR" id="D7P5W0"/>
<dbReference type="KEGG" id="ag:ADI58638"/>
<dbReference type="GO" id="GO:0010181">
    <property type="term" value="F:FMN binding"/>
    <property type="evidence" value="ECO:0007669"/>
    <property type="project" value="InterPro"/>
</dbReference>
<dbReference type="GO" id="GO:0042602">
    <property type="term" value="F:riboflavin reductase (NADPH) activity"/>
    <property type="evidence" value="ECO:0007669"/>
    <property type="project" value="TreeGrafter"/>
</dbReference>
<dbReference type="GO" id="GO:0017000">
    <property type="term" value="P:antibiotic biosynthetic process"/>
    <property type="evidence" value="ECO:0007669"/>
    <property type="project" value="UniProtKB-KW"/>
</dbReference>
<dbReference type="Gene3D" id="2.30.110.10">
    <property type="entry name" value="Electron Transport, Fmn-binding Protein, Chain A"/>
    <property type="match status" value="1"/>
</dbReference>
<dbReference type="InterPro" id="IPR002563">
    <property type="entry name" value="Flavin_Rdtase-like_dom"/>
</dbReference>
<dbReference type="InterPro" id="IPR050268">
    <property type="entry name" value="NADH-dep_flavin_reductase"/>
</dbReference>
<dbReference type="InterPro" id="IPR012349">
    <property type="entry name" value="Split_barrel_FMN-bd"/>
</dbReference>
<dbReference type="PANTHER" id="PTHR30466">
    <property type="entry name" value="FLAVIN REDUCTASE"/>
    <property type="match status" value="1"/>
</dbReference>
<dbReference type="PANTHER" id="PTHR30466:SF11">
    <property type="entry name" value="FLAVIN-DEPENDENT MONOOXYGENASE, REDUCTASE SUBUNIT HSAB"/>
    <property type="match status" value="1"/>
</dbReference>
<dbReference type="Pfam" id="PF01613">
    <property type="entry name" value="Flavin_Reduct"/>
    <property type="match status" value="1"/>
</dbReference>
<dbReference type="SMART" id="SM00903">
    <property type="entry name" value="Flavin_Reduct"/>
    <property type="match status" value="1"/>
</dbReference>
<dbReference type="SUPFAM" id="SSF50475">
    <property type="entry name" value="FMN-binding split barrel"/>
    <property type="match status" value="1"/>
</dbReference>
<comment type="function">
    <text evidence="2 3">Involved in the biosynthesis of the antibiotic asukamycin (PubMed:20522559, PubMed:23890006). When flavin concentration is low, AsuE2 assists the protoasukamycin 4-monooxygenase AsuE1 by providing a reduced form of flavin, enhancing AsuE1 activity (PubMed:23890006).</text>
</comment>
<comment type="catalytic activity">
    <reaction evidence="3">
        <text>FMNH2 + NAD(+) = FMN + NADH + 2 H(+)</text>
        <dbReference type="Rhea" id="RHEA:21620"/>
        <dbReference type="ChEBI" id="CHEBI:15378"/>
        <dbReference type="ChEBI" id="CHEBI:57540"/>
        <dbReference type="ChEBI" id="CHEBI:57618"/>
        <dbReference type="ChEBI" id="CHEBI:57945"/>
        <dbReference type="ChEBI" id="CHEBI:58210"/>
        <dbReference type="EC" id="1.5.1.42"/>
    </reaction>
    <physiologicalReaction direction="right-to-left" evidence="3">
        <dbReference type="Rhea" id="RHEA:21622"/>
    </physiologicalReaction>
</comment>
<comment type="biophysicochemical properties">
    <kinetics>
        <KM evidence="3">171.2 uM for NADH</KM>
        <KM evidence="3">1689 uM for NADPH</KM>
        <text evidence="3">kcat is 2.34 sec(-1) with NADH as substrate. kcat is 5.31 sec(-1) with NADPH as substrate.</text>
    </kinetics>
</comment>
<comment type="pathway">
    <text evidence="2">Antibiotic biosynthesis.</text>
</comment>
<comment type="subunit">
    <text evidence="3">Does not interact with AsuE1, suggesting a possible transient interaction between the two enzymes instead of formation of a stable complex.</text>
</comment>
<comment type="disruption phenotype">
    <text evidence="2">Mutant produces asukamycin in considerably lower yield than the wild type strain and accumulates major amounts of protoasukamycin.</text>
</comment>
<comment type="similarity">
    <text evidence="6">Belongs to the non-flavoprotein flavin reductase family.</text>
</comment>
<evidence type="ECO:0000256" key="1">
    <source>
        <dbReference type="SAM" id="MobiDB-lite"/>
    </source>
</evidence>
<evidence type="ECO:0000269" key="2">
    <source>
    </source>
</evidence>
<evidence type="ECO:0000269" key="3">
    <source>
    </source>
</evidence>
<evidence type="ECO:0000303" key="4">
    <source>
    </source>
</evidence>
<evidence type="ECO:0000303" key="5">
    <source>
    </source>
</evidence>
<evidence type="ECO:0000305" key="6"/>
<feature type="chain" id="PRO_0000457816" description="NADH-dependent FMN reductase AsuE2">
    <location>
        <begin position="1"/>
        <end position="185"/>
    </location>
</feature>
<feature type="region of interest" description="Disordered" evidence="1">
    <location>
        <begin position="1"/>
        <end position="24"/>
    </location>
</feature>
<feature type="compositionally biased region" description="Low complexity" evidence="1">
    <location>
        <begin position="1"/>
        <end position="13"/>
    </location>
</feature>
<feature type="compositionally biased region" description="Basic and acidic residues" evidence="1">
    <location>
        <begin position="14"/>
        <end position="24"/>
    </location>
</feature>